<name>SYGA_POLNA</name>
<accession>A1VJD7</accession>
<evidence type="ECO:0000255" key="1">
    <source>
        <dbReference type="HAMAP-Rule" id="MF_00254"/>
    </source>
</evidence>
<sequence>MLTFQQIILKLQSYWADQGCALLQPYDMEVGAGTSHTATFLRALGPEPWKAAYVQPSRRPKDGRYGENPNRLQHYYQYQVVLKPAPANILELYLGSLEALGFDLKKNDIRFVEDDWENPTLGAWGLGWEVWLNGMEVTQFTYFQQVGGIDCKPATGEITYGLERLAMYLQGVDNVYNLTWTDGLTYGDVYKQNEVEQSTYNFEHSDTDFLFTAFSAHEKQAKHLVEQQLALPAYEQVLKAGHSFNLLDARGAISVTERAAYIGRIRNLARAVAQSYYESRERLGFPLAPREWVEQMTKTSKTTTKKGA</sequence>
<comment type="catalytic activity">
    <reaction evidence="1">
        <text>tRNA(Gly) + glycine + ATP = glycyl-tRNA(Gly) + AMP + diphosphate</text>
        <dbReference type="Rhea" id="RHEA:16013"/>
        <dbReference type="Rhea" id="RHEA-COMP:9664"/>
        <dbReference type="Rhea" id="RHEA-COMP:9683"/>
        <dbReference type="ChEBI" id="CHEBI:30616"/>
        <dbReference type="ChEBI" id="CHEBI:33019"/>
        <dbReference type="ChEBI" id="CHEBI:57305"/>
        <dbReference type="ChEBI" id="CHEBI:78442"/>
        <dbReference type="ChEBI" id="CHEBI:78522"/>
        <dbReference type="ChEBI" id="CHEBI:456215"/>
        <dbReference type="EC" id="6.1.1.14"/>
    </reaction>
</comment>
<comment type="subunit">
    <text evidence="1">Tetramer of two alpha and two beta subunits.</text>
</comment>
<comment type="subcellular location">
    <subcellularLocation>
        <location evidence="1">Cytoplasm</location>
    </subcellularLocation>
</comment>
<comment type="similarity">
    <text evidence="1">Belongs to the class-II aminoacyl-tRNA synthetase family.</text>
</comment>
<dbReference type="EC" id="6.1.1.14" evidence="1"/>
<dbReference type="EMBL" id="CP000529">
    <property type="protein sequence ID" value="ABM35765.1"/>
    <property type="molecule type" value="Genomic_DNA"/>
</dbReference>
<dbReference type="RefSeq" id="WP_011799865.1">
    <property type="nucleotide sequence ID" value="NC_008781.1"/>
</dbReference>
<dbReference type="SMR" id="A1VJD7"/>
<dbReference type="STRING" id="365044.Pnap_0443"/>
<dbReference type="KEGG" id="pna:Pnap_0443"/>
<dbReference type="eggNOG" id="COG0752">
    <property type="taxonomic scope" value="Bacteria"/>
</dbReference>
<dbReference type="HOGENOM" id="CLU_057066_1_0_4"/>
<dbReference type="OrthoDB" id="9802183at2"/>
<dbReference type="Proteomes" id="UP000000644">
    <property type="component" value="Chromosome"/>
</dbReference>
<dbReference type="GO" id="GO:0005829">
    <property type="term" value="C:cytosol"/>
    <property type="evidence" value="ECO:0007669"/>
    <property type="project" value="TreeGrafter"/>
</dbReference>
<dbReference type="GO" id="GO:0005524">
    <property type="term" value="F:ATP binding"/>
    <property type="evidence" value="ECO:0007669"/>
    <property type="project" value="UniProtKB-UniRule"/>
</dbReference>
<dbReference type="GO" id="GO:0004820">
    <property type="term" value="F:glycine-tRNA ligase activity"/>
    <property type="evidence" value="ECO:0007669"/>
    <property type="project" value="UniProtKB-UniRule"/>
</dbReference>
<dbReference type="GO" id="GO:0006426">
    <property type="term" value="P:glycyl-tRNA aminoacylation"/>
    <property type="evidence" value="ECO:0007669"/>
    <property type="project" value="UniProtKB-UniRule"/>
</dbReference>
<dbReference type="CDD" id="cd00733">
    <property type="entry name" value="GlyRS_alpha_core"/>
    <property type="match status" value="1"/>
</dbReference>
<dbReference type="FunFam" id="3.30.930.10:FF:000006">
    <property type="entry name" value="Glycine--tRNA ligase alpha subunit"/>
    <property type="match status" value="1"/>
</dbReference>
<dbReference type="Gene3D" id="3.30.930.10">
    <property type="entry name" value="Bira Bifunctional Protein, Domain 2"/>
    <property type="match status" value="1"/>
</dbReference>
<dbReference type="Gene3D" id="1.20.58.180">
    <property type="entry name" value="Class II aaRS and biotin synthetases, domain 2"/>
    <property type="match status" value="1"/>
</dbReference>
<dbReference type="HAMAP" id="MF_00254">
    <property type="entry name" value="Gly_tRNA_synth_alpha"/>
    <property type="match status" value="1"/>
</dbReference>
<dbReference type="InterPro" id="IPR045864">
    <property type="entry name" value="aa-tRNA-synth_II/BPL/LPL"/>
</dbReference>
<dbReference type="InterPro" id="IPR006194">
    <property type="entry name" value="Gly-tRNA-synth_heterodimer"/>
</dbReference>
<dbReference type="InterPro" id="IPR002310">
    <property type="entry name" value="Gly-tRNA_ligase_asu"/>
</dbReference>
<dbReference type="NCBIfam" id="TIGR00388">
    <property type="entry name" value="glyQ"/>
    <property type="match status" value="1"/>
</dbReference>
<dbReference type="NCBIfam" id="NF006827">
    <property type="entry name" value="PRK09348.1"/>
    <property type="match status" value="1"/>
</dbReference>
<dbReference type="PANTHER" id="PTHR30075:SF2">
    <property type="entry name" value="GLYCINE--TRNA LIGASE, CHLOROPLASTIC_MITOCHONDRIAL 2"/>
    <property type="match status" value="1"/>
</dbReference>
<dbReference type="PANTHER" id="PTHR30075">
    <property type="entry name" value="GLYCYL-TRNA SYNTHETASE"/>
    <property type="match status" value="1"/>
</dbReference>
<dbReference type="Pfam" id="PF02091">
    <property type="entry name" value="tRNA-synt_2e"/>
    <property type="match status" value="1"/>
</dbReference>
<dbReference type="PRINTS" id="PR01044">
    <property type="entry name" value="TRNASYNTHGA"/>
</dbReference>
<dbReference type="SUPFAM" id="SSF55681">
    <property type="entry name" value="Class II aaRS and biotin synthetases"/>
    <property type="match status" value="1"/>
</dbReference>
<dbReference type="PROSITE" id="PS50861">
    <property type="entry name" value="AA_TRNA_LIGASE_II_GLYAB"/>
    <property type="match status" value="1"/>
</dbReference>
<organism>
    <name type="scientific">Polaromonas naphthalenivorans (strain CJ2)</name>
    <dbReference type="NCBI Taxonomy" id="365044"/>
    <lineage>
        <taxon>Bacteria</taxon>
        <taxon>Pseudomonadati</taxon>
        <taxon>Pseudomonadota</taxon>
        <taxon>Betaproteobacteria</taxon>
        <taxon>Burkholderiales</taxon>
        <taxon>Comamonadaceae</taxon>
        <taxon>Polaromonas</taxon>
    </lineage>
</organism>
<keyword id="KW-0030">Aminoacyl-tRNA synthetase</keyword>
<keyword id="KW-0067">ATP-binding</keyword>
<keyword id="KW-0963">Cytoplasm</keyword>
<keyword id="KW-0436">Ligase</keyword>
<keyword id="KW-0547">Nucleotide-binding</keyword>
<keyword id="KW-0648">Protein biosynthesis</keyword>
<keyword id="KW-1185">Reference proteome</keyword>
<feature type="chain" id="PRO_1000047458" description="Glycine--tRNA ligase alpha subunit">
    <location>
        <begin position="1"/>
        <end position="308"/>
    </location>
</feature>
<proteinExistence type="inferred from homology"/>
<reference key="1">
    <citation type="journal article" date="2009" name="Environ. Microbiol.">
        <title>The genome of Polaromonas naphthalenivorans strain CJ2, isolated from coal tar-contaminated sediment, reveals physiological and metabolic versatility and evolution through extensive horizontal gene transfer.</title>
        <authorList>
            <person name="Yagi J.M."/>
            <person name="Sims D."/>
            <person name="Brettin T."/>
            <person name="Bruce D."/>
            <person name="Madsen E.L."/>
        </authorList>
    </citation>
    <scope>NUCLEOTIDE SEQUENCE [LARGE SCALE GENOMIC DNA]</scope>
    <source>
        <strain>CJ2</strain>
    </source>
</reference>
<protein>
    <recommendedName>
        <fullName evidence="1">Glycine--tRNA ligase alpha subunit</fullName>
        <ecNumber evidence="1">6.1.1.14</ecNumber>
    </recommendedName>
    <alternativeName>
        <fullName evidence="1">Glycyl-tRNA synthetase alpha subunit</fullName>
        <shortName evidence="1">GlyRS</shortName>
    </alternativeName>
</protein>
<gene>
    <name evidence="1" type="primary">glyQ</name>
    <name type="ordered locus">Pnap_0443</name>
</gene>